<proteinExistence type="evidence at transcript level"/>
<keyword id="KW-0025">Alternative splicing</keyword>
<keyword id="KW-0149">Chlorophyll biosynthesis</keyword>
<keyword id="KW-0150">Chloroplast</keyword>
<keyword id="KW-0350">Heme biosynthesis</keyword>
<keyword id="KW-0560">Oxidoreductase</keyword>
<keyword id="KW-0934">Plastid</keyword>
<keyword id="KW-0627">Porphyrin biosynthesis</keyword>
<keyword id="KW-1185">Reference proteome</keyword>
<keyword id="KW-0809">Transit peptide</keyword>
<comment type="function">
    <text evidence="1">Key enzyme in heme biosynthesis. Catalyzes the oxidative decarboxylation of propionic acid side chains of rings A and B of coproporphyrinogen III (By similarity).</text>
</comment>
<comment type="catalytic activity">
    <reaction>
        <text>coproporphyrinogen III + O2 + 2 H(+) = protoporphyrinogen IX + 2 CO2 + 2 H2O</text>
        <dbReference type="Rhea" id="RHEA:18257"/>
        <dbReference type="ChEBI" id="CHEBI:15377"/>
        <dbReference type="ChEBI" id="CHEBI:15378"/>
        <dbReference type="ChEBI" id="CHEBI:15379"/>
        <dbReference type="ChEBI" id="CHEBI:16526"/>
        <dbReference type="ChEBI" id="CHEBI:57307"/>
        <dbReference type="ChEBI" id="CHEBI:57309"/>
        <dbReference type="EC" id="1.3.3.3"/>
    </reaction>
</comment>
<comment type="pathway">
    <text>Porphyrin-containing compound metabolism; protoporphyrin-IX biosynthesis; protoporphyrinogen-IX from coproporphyrinogen-III (O2 route): step 1/1.</text>
</comment>
<comment type="pathway">
    <text>Porphyrin-containing compound metabolism; chlorophyll biosynthesis.</text>
</comment>
<comment type="subunit">
    <text evidence="1">Homodimer.</text>
</comment>
<comment type="subcellular location">
    <subcellularLocation>
        <location evidence="3">Plastid</location>
        <location evidence="3">Chloroplast</location>
    </subcellularLocation>
</comment>
<comment type="alternative products">
    <event type="alternative splicing"/>
    <isoform>
        <id>Q93Z96-1</id>
        <name>1</name>
        <sequence type="displayed"/>
    </isoform>
    <isoform>
        <id>Q93Z96-2</id>
        <name>2</name>
        <sequence type="described" ref="VSP_046551"/>
    </isoform>
</comment>
<comment type="similarity">
    <text evidence="3">Belongs to the aerobic coproporphyrinogen-III oxidase family.</text>
</comment>
<comment type="sequence caution" evidence="3">
    <conflict type="frameshift">
        <sequence resource="EMBL-CDS" id="CAD12662"/>
    </conflict>
</comment>
<feature type="transit peptide" description="Chloroplast" evidence="2">
    <location>
        <begin position="1"/>
        <end position="48"/>
    </location>
</feature>
<feature type="chain" id="PRO_0000422670" description="Coproporphyrinogen-III oxidase 2, chloroplastic">
    <location>
        <begin position="49"/>
        <end position="233"/>
    </location>
</feature>
<feature type="active site" description="Proton donor" evidence="1">
    <location>
        <position position="188"/>
    </location>
</feature>
<feature type="binding site" evidence="1">
    <location>
        <position position="174"/>
    </location>
    <ligand>
        <name>substrate</name>
    </ligand>
</feature>
<feature type="splice variant" id="VSP_046551" description="In isoform 2." evidence="3">
    <original>V</original>
    <variation>VVKPDPLF</variation>
    <location>
        <position position="233"/>
    </location>
</feature>
<feature type="sequence conflict" description="In Ref. 1; CAD12662." evidence="3" ref="1">
    <original>S</original>
    <variation>C</variation>
    <location>
        <position position="13"/>
    </location>
</feature>
<feature type="sequence conflict" description="In Ref. 1; CAD12662." evidence="3" ref="1">
    <original>R</original>
    <variation>K</variation>
    <location>
        <position position="81"/>
    </location>
</feature>
<feature type="sequence conflict" description="In Ref. 1; CAD12662." evidence="3" ref="1">
    <original>G</original>
    <variation>A</variation>
    <location>
        <position position="105"/>
    </location>
</feature>
<reference key="1">
    <citation type="journal article" date="2002" name="Plant Physiol. Biochem.">
        <title>Molecular characterisation of coproporphyrinogen oxidase from Glycine max and Arabidopsis thaliana.</title>
        <authorList>
            <person name="Santana M.A."/>
            <person name="Tan F.C."/>
            <person name="Smith A.G."/>
        </authorList>
    </citation>
    <scope>NUCLEOTIDE SEQUENCE [MRNA] (ISOFORM 1)</scope>
    <source>
        <strain>cv. Landsberg erecta</strain>
    </source>
</reference>
<reference key="2">
    <citation type="journal article" date="2003" name="Science">
        <title>Empirical analysis of transcriptional activity in the Arabidopsis genome.</title>
        <authorList>
            <person name="Yamada K."/>
            <person name="Lim J."/>
            <person name="Dale J.M."/>
            <person name="Chen H."/>
            <person name="Shinn P."/>
            <person name="Palm C.J."/>
            <person name="Southwick A.M."/>
            <person name="Wu H.C."/>
            <person name="Kim C.J."/>
            <person name="Nguyen M."/>
            <person name="Pham P.K."/>
            <person name="Cheuk R.F."/>
            <person name="Karlin-Newmann G."/>
            <person name="Liu S.X."/>
            <person name="Lam B."/>
            <person name="Sakano H."/>
            <person name="Wu T."/>
            <person name="Yu G."/>
            <person name="Miranda M."/>
            <person name="Quach H.L."/>
            <person name="Tripp M."/>
            <person name="Chang C.H."/>
            <person name="Lee J.M."/>
            <person name="Toriumi M.J."/>
            <person name="Chan M.M."/>
            <person name="Tang C.C."/>
            <person name="Onodera C.S."/>
            <person name="Deng J.M."/>
            <person name="Akiyama K."/>
            <person name="Ansari Y."/>
            <person name="Arakawa T."/>
            <person name="Banh J."/>
            <person name="Banno F."/>
            <person name="Bowser L."/>
            <person name="Brooks S.Y."/>
            <person name="Carninci P."/>
            <person name="Chao Q."/>
            <person name="Choy N."/>
            <person name="Enju A."/>
            <person name="Goldsmith A.D."/>
            <person name="Gurjal M."/>
            <person name="Hansen N.F."/>
            <person name="Hayashizaki Y."/>
            <person name="Johnson-Hopson C."/>
            <person name="Hsuan V.W."/>
            <person name="Iida K."/>
            <person name="Karnes M."/>
            <person name="Khan S."/>
            <person name="Koesema E."/>
            <person name="Ishida J."/>
            <person name="Jiang P.X."/>
            <person name="Jones T."/>
            <person name="Kawai J."/>
            <person name="Kamiya A."/>
            <person name="Meyers C."/>
            <person name="Nakajima M."/>
            <person name="Narusaka M."/>
            <person name="Seki M."/>
            <person name="Sakurai T."/>
            <person name="Satou M."/>
            <person name="Tamse R."/>
            <person name="Vaysberg M."/>
            <person name="Wallender E.K."/>
            <person name="Wong C."/>
            <person name="Yamamura Y."/>
            <person name="Yuan S."/>
            <person name="Shinozaki K."/>
            <person name="Davis R.W."/>
            <person name="Theologis A."/>
            <person name="Ecker J.R."/>
        </authorList>
    </citation>
    <scope>NUCLEOTIDE SEQUENCE [LARGE SCALE MRNA] (ISOFORM 1)</scope>
    <source>
        <strain>cv. Columbia</strain>
    </source>
</reference>
<reference key="3">
    <citation type="journal article" date="2017" name="Plant J.">
        <title>Araport11: a complete reannotation of the Arabidopsis thaliana reference genome.</title>
        <authorList>
            <person name="Cheng C.Y."/>
            <person name="Krishnakumar V."/>
            <person name="Chan A.P."/>
            <person name="Thibaud-Nissen F."/>
            <person name="Schobel S."/>
            <person name="Town C.D."/>
        </authorList>
    </citation>
    <scope>GENOME REANNOTATION</scope>
    <source>
        <strain>cv. Columbia</strain>
    </source>
</reference>
<organism>
    <name type="scientific">Arabidopsis thaliana</name>
    <name type="common">Mouse-ear cress</name>
    <dbReference type="NCBI Taxonomy" id="3702"/>
    <lineage>
        <taxon>Eukaryota</taxon>
        <taxon>Viridiplantae</taxon>
        <taxon>Streptophyta</taxon>
        <taxon>Embryophyta</taxon>
        <taxon>Tracheophyta</taxon>
        <taxon>Spermatophyta</taxon>
        <taxon>Magnoliopsida</taxon>
        <taxon>eudicotyledons</taxon>
        <taxon>Gunneridae</taxon>
        <taxon>Pentapetalae</taxon>
        <taxon>rosids</taxon>
        <taxon>malvids</taxon>
        <taxon>Brassicales</taxon>
        <taxon>Brassicaceae</taxon>
        <taxon>Camelineae</taxon>
        <taxon>Arabidopsis</taxon>
    </lineage>
</organism>
<gene>
    <name type="primary">CPX2</name>
    <name type="synonym">HEMF2</name>
    <name type="ordered locus">At4g03205</name>
    <name type="ORF">F4C21</name>
</gene>
<name>HEM62_ARATH</name>
<sequence>MASHSSTLFTSPSSFILFSSHRLKSSPNYFTYHFPRSVKRPHFDLRCSVSIEKEVPETERPFTFLRVSDGDQTQSSSYSVRARFEKMIRTAQDKVCEAIEAVEEGPKFKEDVWSRPGGGGGISRILQDGNVWEKAGVNVSVIYGVMPPEAYRAAKAATSEQKPGPIPFFAAGTSSVLHPQNPFAPTLHFNYRYFETDAPKDVPGAPRQWWFGGGTDFTPAYIFEEDVKHFHSV</sequence>
<accession>Q93Z96</accession>
<accession>F4JI66</accession>
<accession>Q710F7</accession>
<protein>
    <recommendedName>
        <fullName>Coproporphyrinogen-III oxidase 2, chloroplastic</fullName>
        <shortName>AtCPO-II</shortName>
        <shortName>Coprogen oxidase</shortName>
        <shortName>Coproporphyrinogenase</shortName>
        <ecNumber>1.3.3.3</ecNumber>
    </recommendedName>
</protein>
<dbReference type="EC" id="1.3.3.3"/>
<dbReference type="EMBL" id="AJ420797">
    <property type="protein sequence ID" value="CAD12662.1"/>
    <property type="status" value="ALT_FRAME"/>
    <property type="molecule type" value="mRNA"/>
</dbReference>
<dbReference type="EMBL" id="CP002687">
    <property type="protein sequence ID" value="AEE82290.1"/>
    <property type="molecule type" value="Genomic_DNA"/>
</dbReference>
<dbReference type="EMBL" id="CP002687">
    <property type="protein sequence ID" value="AEE82291.1"/>
    <property type="molecule type" value="Genomic_DNA"/>
</dbReference>
<dbReference type="EMBL" id="AY057708">
    <property type="protein sequence ID" value="AAL15338.1"/>
    <property type="molecule type" value="mRNA"/>
</dbReference>
<dbReference type="EMBL" id="BT006346">
    <property type="protein sequence ID" value="AAP21154.1"/>
    <property type="molecule type" value="mRNA"/>
</dbReference>
<dbReference type="RefSeq" id="NP_567256.3">
    <molecule id="Q93Z96-1"/>
    <property type="nucleotide sequence ID" value="NM_116557.4"/>
</dbReference>
<dbReference type="RefSeq" id="NP_567257.2">
    <molecule id="Q93Z96-2"/>
    <property type="nucleotide sequence ID" value="NM_116558.2"/>
</dbReference>
<dbReference type="SMR" id="Q93Z96"/>
<dbReference type="BioGRID" id="13320">
    <property type="interactions" value="16"/>
</dbReference>
<dbReference type="FunCoup" id="Q93Z96">
    <property type="interactions" value="836"/>
</dbReference>
<dbReference type="STRING" id="3702.Q93Z96"/>
<dbReference type="PaxDb" id="3702-AT4G03205.2"/>
<dbReference type="ProMEX" id="Q93Z96"/>
<dbReference type="EnsemblPlants" id="AT4G03205.1">
    <molecule id="Q93Z96-1"/>
    <property type="protein sequence ID" value="AT4G03205.1"/>
    <property type="gene ID" value="AT4G03205"/>
</dbReference>
<dbReference type="EnsemblPlants" id="AT4G03205.2">
    <molecule id="Q93Z96-2"/>
    <property type="protein sequence ID" value="AT4G03205.2"/>
    <property type="gene ID" value="AT4G03205"/>
</dbReference>
<dbReference type="GeneID" id="828029"/>
<dbReference type="Gramene" id="AT4G03205.1">
    <molecule id="Q93Z96-1"/>
    <property type="protein sequence ID" value="AT4G03205.1"/>
    <property type="gene ID" value="AT4G03205"/>
</dbReference>
<dbReference type="Gramene" id="AT4G03205.2">
    <molecule id="Q93Z96-2"/>
    <property type="protein sequence ID" value="AT4G03205.2"/>
    <property type="gene ID" value="AT4G03205"/>
</dbReference>
<dbReference type="KEGG" id="ath:AT4G03205"/>
<dbReference type="Araport" id="AT4G03205"/>
<dbReference type="TAIR" id="AT4G03205">
    <property type="gene designation" value="HEMF2"/>
</dbReference>
<dbReference type="eggNOG" id="KOG1518">
    <property type="taxonomic scope" value="Eukaryota"/>
</dbReference>
<dbReference type="HOGENOM" id="CLU_103932_0_0_1"/>
<dbReference type="InParanoid" id="Q93Z96"/>
<dbReference type="OMA" id="REDAWTC"/>
<dbReference type="PhylomeDB" id="Q93Z96"/>
<dbReference type="BRENDA" id="1.3.3.3">
    <property type="organism ID" value="399"/>
</dbReference>
<dbReference type="UniPathway" id="UPA00251">
    <property type="reaction ID" value="UER00322"/>
</dbReference>
<dbReference type="UniPathway" id="UPA00668"/>
<dbReference type="PRO" id="PR:Q93Z96"/>
<dbReference type="Proteomes" id="UP000006548">
    <property type="component" value="Chromosome 4"/>
</dbReference>
<dbReference type="ExpressionAtlas" id="Q93Z96">
    <property type="expression patterns" value="baseline and differential"/>
</dbReference>
<dbReference type="GO" id="GO:0009570">
    <property type="term" value="C:chloroplast stroma"/>
    <property type="evidence" value="ECO:0007005"/>
    <property type="project" value="TAIR"/>
</dbReference>
<dbReference type="GO" id="GO:0005829">
    <property type="term" value="C:cytosol"/>
    <property type="evidence" value="ECO:0007005"/>
    <property type="project" value="TAIR"/>
</dbReference>
<dbReference type="GO" id="GO:0004109">
    <property type="term" value="F:coproporphyrinogen oxidase activity"/>
    <property type="evidence" value="ECO:0007669"/>
    <property type="project" value="UniProtKB-EC"/>
</dbReference>
<dbReference type="GO" id="GO:0015995">
    <property type="term" value="P:chlorophyll biosynthetic process"/>
    <property type="evidence" value="ECO:0007669"/>
    <property type="project" value="UniProtKB-UniPathway"/>
</dbReference>
<dbReference type="GO" id="GO:0006782">
    <property type="term" value="P:protoporphyrinogen IX biosynthetic process"/>
    <property type="evidence" value="ECO:0007669"/>
    <property type="project" value="UniProtKB-UniPathway"/>
</dbReference>
<dbReference type="FunFam" id="3.40.1500.10:FF:000015">
    <property type="entry name" value="Coproporphyrinogen-III oxidase 2, chloroplastic"/>
    <property type="match status" value="1"/>
</dbReference>
<dbReference type="Gene3D" id="3.40.1500.10">
    <property type="entry name" value="Coproporphyrinogen III oxidase, aerobic"/>
    <property type="match status" value="1"/>
</dbReference>
<dbReference type="InterPro" id="IPR001260">
    <property type="entry name" value="Coprogen_oxidase_aer"/>
</dbReference>
<dbReference type="InterPro" id="IPR036406">
    <property type="entry name" value="Coprogen_oxidase_aer_sf"/>
</dbReference>
<dbReference type="PANTHER" id="PTHR10755">
    <property type="entry name" value="COPROPORPHYRINOGEN III OXIDASE, MITOCHONDRIAL"/>
    <property type="match status" value="1"/>
</dbReference>
<dbReference type="PANTHER" id="PTHR10755:SF0">
    <property type="entry name" value="OXYGEN-DEPENDENT COPROPORPHYRINOGEN-III OXIDASE, MITOCHONDRIAL"/>
    <property type="match status" value="1"/>
</dbReference>
<dbReference type="Pfam" id="PF01218">
    <property type="entry name" value="Coprogen_oxidas"/>
    <property type="match status" value="1"/>
</dbReference>
<dbReference type="PRINTS" id="PR00073">
    <property type="entry name" value="COPRGNOXDASE"/>
</dbReference>
<dbReference type="SUPFAM" id="SSF102886">
    <property type="entry name" value="Coproporphyrinogen III oxidase"/>
    <property type="match status" value="1"/>
</dbReference>
<evidence type="ECO:0000250" key="1"/>
<evidence type="ECO:0000255" key="2"/>
<evidence type="ECO:0000305" key="3"/>